<gene>
    <name evidence="1" type="primary">fabR</name>
    <name type="ordered locus">SSPA3690</name>
</gene>
<protein>
    <recommendedName>
        <fullName evidence="1">HTH-type transcriptional repressor FabR</fullName>
    </recommendedName>
</protein>
<proteinExistence type="inferred from homology"/>
<evidence type="ECO:0000255" key="1">
    <source>
        <dbReference type="HAMAP-Rule" id="MF_01190"/>
    </source>
</evidence>
<accession>B5BJN7</accession>
<organism>
    <name type="scientific">Salmonella paratyphi A (strain AKU_12601)</name>
    <dbReference type="NCBI Taxonomy" id="554290"/>
    <lineage>
        <taxon>Bacteria</taxon>
        <taxon>Pseudomonadati</taxon>
        <taxon>Pseudomonadota</taxon>
        <taxon>Gammaproteobacteria</taxon>
        <taxon>Enterobacterales</taxon>
        <taxon>Enterobacteriaceae</taxon>
        <taxon>Salmonella</taxon>
    </lineage>
</organism>
<name>FABR_SALPK</name>
<feature type="chain" id="PRO_1000138360" description="HTH-type transcriptional repressor FabR">
    <location>
        <begin position="1"/>
        <end position="210"/>
    </location>
</feature>
<feature type="domain" description="HTH tetR-type" evidence="1">
    <location>
        <begin position="10"/>
        <end position="70"/>
    </location>
</feature>
<feature type="DNA-binding region" description="H-T-H motif" evidence="1">
    <location>
        <begin position="33"/>
        <end position="52"/>
    </location>
</feature>
<dbReference type="EMBL" id="FM200053">
    <property type="protein sequence ID" value="CAR61973.1"/>
    <property type="molecule type" value="Genomic_DNA"/>
</dbReference>
<dbReference type="SMR" id="B5BJN7"/>
<dbReference type="KEGG" id="sek:SSPA3690"/>
<dbReference type="HOGENOM" id="CLU_081861_0_0_6"/>
<dbReference type="Proteomes" id="UP000001869">
    <property type="component" value="Chromosome"/>
</dbReference>
<dbReference type="GO" id="GO:0005737">
    <property type="term" value="C:cytoplasm"/>
    <property type="evidence" value="ECO:0007669"/>
    <property type="project" value="UniProtKB-SubCell"/>
</dbReference>
<dbReference type="GO" id="GO:0003677">
    <property type="term" value="F:DNA binding"/>
    <property type="evidence" value="ECO:0007669"/>
    <property type="project" value="UniProtKB-KW"/>
</dbReference>
<dbReference type="GO" id="GO:0003700">
    <property type="term" value="F:DNA-binding transcription factor activity"/>
    <property type="evidence" value="ECO:0007669"/>
    <property type="project" value="UniProtKB-UniRule"/>
</dbReference>
<dbReference type="GO" id="GO:0006633">
    <property type="term" value="P:fatty acid biosynthetic process"/>
    <property type="evidence" value="ECO:0007669"/>
    <property type="project" value="UniProtKB-UniRule"/>
</dbReference>
<dbReference type="GO" id="GO:0045717">
    <property type="term" value="P:negative regulation of fatty acid biosynthetic process"/>
    <property type="evidence" value="ECO:0007669"/>
    <property type="project" value="UniProtKB-UniRule"/>
</dbReference>
<dbReference type="FunFam" id="1.10.10.60:FF:000034">
    <property type="entry name" value="HTH-type transcriptional repressor FabR"/>
    <property type="match status" value="1"/>
</dbReference>
<dbReference type="FunFam" id="1.10.357.10:FF:000001">
    <property type="entry name" value="HTH-type transcriptional repressor FabR"/>
    <property type="match status" value="1"/>
</dbReference>
<dbReference type="Gene3D" id="1.10.10.60">
    <property type="entry name" value="Homeodomain-like"/>
    <property type="match status" value="1"/>
</dbReference>
<dbReference type="Gene3D" id="1.10.357.10">
    <property type="entry name" value="Tetracycline Repressor, domain 2"/>
    <property type="match status" value="1"/>
</dbReference>
<dbReference type="HAMAP" id="MF_01190">
    <property type="entry name" value="HTH_type_FabR"/>
    <property type="match status" value="1"/>
</dbReference>
<dbReference type="InterPro" id="IPR054129">
    <property type="entry name" value="DesT_TetR_C"/>
</dbReference>
<dbReference type="InterPro" id="IPR009057">
    <property type="entry name" value="Homeodomain-like_sf"/>
</dbReference>
<dbReference type="InterPro" id="IPR001647">
    <property type="entry name" value="HTH_TetR"/>
</dbReference>
<dbReference type="InterPro" id="IPR050692">
    <property type="entry name" value="HTH_transcr_repressor_FabR"/>
</dbReference>
<dbReference type="InterPro" id="IPR023764">
    <property type="entry name" value="Tscrpt_reg_HTH_FabR"/>
</dbReference>
<dbReference type="NCBIfam" id="NF008402">
    <property type="entry name" value="PRK11202.1"/>
    <property type="match status" value="1"/>
</dbReference>
<dbReference type="PANTHER" id="PTHR47752">
    <property type="entry name" value="HTH-TYPE TRANSCRIPTIONAL REPRESSOR FABR"/>
    <property type="match status" value="1"/>
</dbReference>
<dbReference type="PANTHER" id="PTHR47752:SF1">
    <property type="entry name" value="HTH-TYPE TRANSCRIPTIONAL REPRESSOR FABR"/>
    <property type="match status" value="1"/>
</dbReference>
<dbReference type="Pfam" id="PF21943">
    <property type="entry name" value="TetR_C_46"/>
    <property type="match status" value="1"/>
</dbReference>
<dbReference type="Pfam" id="PF00440">
    <property type="entry name" value="TetR_N"/>
    <property type="match status" value="1"/>
</dbReference>
<dbReference type="SUPFAM" id="SSF46689">
    <property type="entry name" value="Homeodomain-like"/>
    <property type="match status" value="1"/>
</dbReference>
<dbReference type="PROSITE" id="PS50977">
    <property type="entry name" value="HTH_TETR_2"/>
    <property type="match status" value="1"/>
</dbReference>
<comment type="function">
    <text evidence="1">Represses the transcription of fabB, involved in unsaturated fatty acid (UFA) biosynthesis. By controlling UFA production, FabR directly influences the physical properties of the membrane bilayer.</text>
</comment>
<comment type="subunit">
    <text evidence="1">Homodimer.</text>
</comment>
<comment type="subcellular location">
    <subcellularLocation>
        <location evidence="1">Cytoplasm</location>
    </subcellularLocation>
</comment>
<sequence length="210" mass="23901">MGVRAQQKEKTRRSLVEAAFSQLSAERSFASLSLREVAREAGIAPTSFYRHFRDVDELGLTMVDESGLMLRQLMRQARQRIAKGGSVIRTSVSTFMEFIGNNPNAFRLLLRERSGTSAAFRAAVAREIQHFIAELADYLELENHMPRAFTEAQAEAMVTIVFSAGAEALDIGAEQRRQLEERLVLQLRMIAKGAYYWYRREQEKIAQHSE</sequence>
<reference key="1">
    <citation type="journal article" date="2009" name="BMC Genomics">
        <title>Pseudogene accumulation in the evolutionary histories of Salmonella enterica serovars Paratyphi A and Typhi.</title>
        <authorList>
            <person name="Holt K.E."/>
            <person name="Thomson N.R."/>
            <person name="Wain J."/>
            <person name="Langridge G.C."/>
            <person name="Hasan R."/>
            <person name="Bhutta Z.A."/>
            <person name="Quail M.A."/>
            <person name="Norbertczak H."/>
            <person name="Walker D."/>
            <person name="Simmonds M."/>
            <person name="White B."/>
            <person name="Bason N."/>
            <person name="Mungall K."/>
            <person name="Dougan G."/>
            <person name="Parkhill J."/>
        </authorList>
    </citation>
    <scope>NUCLEOTIDE SEQUENCE [LARGE SCALE GENOMIC DNA]</scope>
    <source>
        <strain>AKU_12601</strain>
    </source>
</reference>
<keyword id="KW-0963">Cytoplasm</keyword>
<keyword id="KW-0238">DNA-binding</keyword>
<keyword id="KW-0275">Fatty acid biosynthesis</keyword>
<keyword id="KW-0276">Fatty acid metabolism</keyword>
<keyword id="KW-0444">Lipid biosynthesis</keyword>
<keyword id="KW-0443">Lipid metabolism</keyword>
<keyword id="KW-0678">Repressor</keyword>
<keyword id="KW-0804">Transcription</keyword>
<keyword id="KW-0805">Transcription regulation</keyword>